<comment type="function">
    <text evidence="1">Catalyzes the synthesis of the hydroxymethylpyrimidine phosphate (HMP-P) moiety of thiamine from aminoimidazole ribotide (AIR) in a radical S-adenosyl-L-methionine (SAM)-dependent reaction.</text>
</comment>
<comment type="catalytic activity">
    <reaction evidence="1">
        <text>5-amino-1-(5-phospho-beta-D-ribosyl)imidazole + S-adenosyl-L-methionine = 4-amino-2-methyl-5-(phosphooxymethyl)pyrimidine + CO + 5'-deoxyadenosine + formate + L-methionine + 3 H(+)</text>
        <dbReference type="Rhea" id="RHEA:24840"/>
        <dbReference type="ChEBI" id="CHEBI:15378"/>
        <dbReference type="ChEBI" id="CHEBI:15740"/>
        <dbReference type="ChEBI" id="CHEBI:17245"/>
        <dbReference type="ChEBI" id="CHEBI:17319"/>
        <dbReference type="ChEBI" id="CHEBI:57844"/>
        <dbReference type="ChEBI" id="CHEBI:58354"/>
        <dbReference type="ChEBI" id="CHEBI:59789"/>
        <dbReference type="ChEBI" id="CHEBI:137981"/>
        <dbReference type="EC" id="4.1.99.17"/>
    </reaction>
</comment>
<comment type="cofactor">
    <cofactor evidence="1">
        <name>[4Fe-4S] cluster</name>
        <dbReference type="ChEBI" id="CHEBI:49883"/>
    </cofactor>
    <text evidence="1">Binds 1 [4Fe-4S] cluster per subunit. The cluster is coordinated with 3 cysteines and an exchangeable S-adenosyl-L-methionine.</text>
</comment>
<comment type="pathway">
    <text evidence="1">Cofactor biosynthesis; thiamine diphosphate biosynthesis.</text>
</comment>
<comment type="similarity">
    <text evidence="1">Belongs to the ThiC family.</text>
</comment>
<comment type="sequence caution" evidence="2">
    <conflict type="erroneous initiation">
        <sequence resource="EMBL-CDS" id="AAS71238"/>
    </conflict>
</comment>
<feature type="chain" id="PRO_0000152811" description="Phosphomethylpyrimidine synthase">
    <location>
        <begin position="1"/>
        <end position="495"/>
    </location>
</feature>
<feature type="binding site" evidence="1">
    <location>
        <position position="125"/>
    </location>
    <ligand>
        <name>substrate</name>
    </ligand>
</feature>
<feature type="binding site" evidence="1">
    <location>
        <position position="154"/>
    </location>
    <ligand>
        <name>substrate</name>
    </ligand>
</feature>
<feature type="binding site" evidence="1">
    <location>
        <position position="183"/>
    </location>
    <ligand>
        <name>substrate</name>
    </ligand>
</feature>
<feature type="binding site" evidence="1">
    <location>
        <position position="219"/>
    </location>
    <ligand>
        <name>substrate</name>
    </ligand>
</feature>
<feature type="binding site" evidence="1">
    <location>
        <begin position="239"/>
        <end position="241"/>
    </location>
    <ligand>
        <name>substrate</name>
    </ligand>
</feature>
<feature type="binding site" evidence="1">
    <location>
        <begin position="280"/>
        <end position="283"/>
    </location>
    <ligand>
        <name>substrate</name>
    </ligand>
</feature>
<feature type="binding site" evidence="1">
    <location>
        <position position="319"/>
    </location>
    <ligand>
        <name>substrate</name>
    </ligand>
</feature>
<feature type="binding site" evidence="1">
    <location>
        <position position="323"/>
    </location>
    <ligand>
        <name>Zn(2+)</name>
        <dbReference type="ChEBI" id="CHEBI:29105"/>
    </ligand>
</feature>
<feature type="binding site" evidence="1">
    <location>
        <position position="346"/>
    </location>
    <ligand>
        <name>substrate</name>
    </ligand>
</feature>
<feature type="binding site" evidence="1">
    <location>
        <position position="387"/>
    </location>
    <ligand>
        <name>Zn(2+)</name>
        <dbReference type="ChEBI" id="CHEBI:29105"/>
    </ligand>
</feature>
<feature type="binding site" evidence="1">
    <location>
        <position position="467"/>
    </location>
    <ligand>
        <name>[4Fe-4S] cluster</name>
        <dbReference type="ChEBI" id="CHEBI:49883"/>
        <note>4Fe-4S-S-AdoMet</note>
    </ligand>
</feature>
<feature type="binding site" evidence="1">
    <location>
        <position position="470"/>
    </location>
    <ligand>
        <name>[4Fe-4S] cluster</name>
        <dbReference type="ChEBI" id="CHEBI:49883"/>
        <note>4Fe-4S-S-AdoMet</note>
    </ligand>
</feature>
<feature type="binding site" evidence="1">
    <location>
        <position position="475"/>
    </location>
    <ligand>
        <name>[4Fe-4S] cluster</name>
        <dbReference type="ChEBI" id="CHEBI:49883"/>
        <note>4Fe-4S-S-AdoMet</note>
    </ligand>
</feature>
<keyword id="KW-0004">4Fe-4S</keyword>
<keyword id="KW-0408">Iron</keyword>
<keyword id="KW-0411">Iron-sulfur</keyword>
<keyword id="KW-0456">Lyase</keyword>
<keyword id="KW-0479">Metal-binding</keyword>
<keyword id="KW-0949">S-adenosyl-L-methionine</keyword>
<keyword id="KW-0784">Thiamine biosynthesis</keyword>
<keyword id="KW-0862">Zinc</keyword>
<reference key="1">
    <citation type="journal article" date="2004" name="J. Bacteriol.">
        <title>Comparative genomics of two Leptospira interrogans serovars reveals novel insights into physiology and pathogenesis.</title>
        <authorList>
            <person name="Nascimento A.L.T.O."/>
            <person name="Ko A.I."/>
            <person name="Martins E.A.L."/>
            <person name="Monteiro-Vitorello C.B."/>
            <person name="Ho P.L."/>
            <person name="Haake D.A."/>
            <person name="Verjovski-Almeida S."/>
            <person name="Hartskeerl R.A."/>
            <person name="Marques M.V."/>
            <person name="Oliveira M.C."/>
            <person name="Menck C.F.M."/>
            <person name="Leite L.C.C."/>
            <person name="Carrer H."/>
            <person name="Coutinho L.L."/>
            <person name="Degrave W.M."/>
            <person name="Dellagostin O.A."/>
            <person name="El-Dorry H."/>
            <person name="Ferro E.S."/>
            <person name="Ferro M.I.T."/>
            <person name="Furlan L.R."/>
            <person name="Gamberini M."/>
            <person name="Giglioti E.A."/>
            <person name="Goes-Neto A."/>
            <person name="Goldman G.H."/>
            <person name="Goldman M.H.S."/>
            <person name="Harakava R."/>
            <person name="Jeronimo S.M.B."/>
            <person name="Junqueira-de-Azevedo I.L.M."/>
            <person name="Kimura E.T."/>
            <person name="Kuramae E.E."/>
            <person name="Lemos E.G.M."/>
            <person name="Lemos M.V.F."/>
            <person name="Marino C.L."/>
            <person name="Nunes L.R."/>
            <person name="de Oliveira R.C."/>
            <person name="Pereira G.G."/>
            <person name="Reis M.S."/>
            <person name="Schriefer A."/>
            <person name="Siqueira W.J."/>
            <person name="Sommer P."/>
            <person name="Tsai S.M."/>
            <person name="Simpson A.J.G."/>
            <person name="Ferro J.A."/>
            <person name="Camargo L.E.A."/>
            <person name="Kitajima J.P."/>
            <person name="Setubal J.C."/>
            <person name="Van Sluys M.A."/>
        </authorList>
    </citation>
    <scope>NUCLEOTIDE SEQUENCE [LARGE SCALE GENOMIC DNA]</scope>
    <source>
        <strain>Fiocruz L1-130</strain>
    </source>
</reference>
<accession>Q72NZ8</accession>
<organism>
    <name type="scientific">Leptospira interrogans serogroup Icterohaemorrhagiae serovar copenhageni (strain Fiocruz L1-130)</name>
    <dbReference type="NCBI Taxonomy" id="267671"/>
    <lineage>
        <taxon>Bacteria</taxon>
        <taxon>Pseudomonadati</taxon>
        <taxon>Spirochaetota</taxon>
        <taxon>Spirochaetia</taxon>
        <taxon>Leptospirales</taxon>
        <taxon>Leptospiraceae</taxon>
        <taxon>Leptospira</taxon>
    </lineage>
</organism>
<gene>
    <name evidence="1" type="primary">thiC</name>
    <name type="ordered locus">LIC_12679</name>
</gene>
<proteinExistence type="inferred from homology"/>
<name>THIC_LEPIC</name>
<dbReference type="EC" id="4.1.99.17" evidence="1"/>
<dbReference type="EMBL" id="AE016823">
    <property type="protein sequence ID" value="AAS71238.1"/>
    <property type="status" value="ALT_INIT"/>
    <property type="molecule type" value="Genomic_DNA"/>
</dbReference>
<dbReference type="RefSeq" id="WP_002072371.1">
    <property type="nucleotide sequence ID" value="NC_005823.1"/>
</dbReference>
<dbReference type="SMR" id="Q72NZ8"/>
<dbReference type="GeneID" id="61142558"/>
<dbReference type="KEGG" id="lic:LIC_12679"/>
<dbReference type="HOGENOM" id="CLU_013181_2_1_12"/>
<dbReference type="UniPathway" id="UPA00060"/>
<dbReference type="Proteomes" id="UP000007037">
    <property type="component" value="Chromosome I"/>
</dbReference>
<dbReference type="GO" id="GO:0005829">
    <property type="term" value="C:cytosol"/>
    <property type="evidence" value="ECO:0007669"/>
    <property type="project" value="TreeGrafter"/>
</dbReference>
<dbReference type="GO" id="GO:0051539">
    <property type="term" value="F:4 iron, 4 sulfur cluster binding"/>
    <property type="evidence" value="ECO:0007669"/>
    <property type="project" value="UniProtKB-KW"/>
</dbReference>
<dbReference type="GO" id="GO:0016830">
    <property type="term" value="F:carbon-carbon lyase activity"/>
    <property type="evidence" value="ECO:0007669"/>
    <property type="project" value="InterPro"/>
</dbReference>
<dbReference type="GO" id="GO:0008270">
    <property type="term" value="F:zinc ion binding"/>
    <property type="evidence" value="ECO:0007669"/>
    <property type="project" value="UniProtKB-UniRule"/>
</dbReference>
<dbReference type="GO" id="GO:0009228">
    <property type="term" value="P:thiamine biosynthetic process"/>
    <property type="evidence" value="ECO:0007669"/>
    <property type="project" value="UniProtKB-KW"/>
</dbReference>
<dbReference type="GO" id="GO:0009229">
    <property type="term" value="P:thiamine diphosphate biosynthetic process"/>
    <property type="evidence" value="ECO:0007669"/>
    <property type="project" value="UniProtKB-UniRule"/>
</dbReference>
<dbReference type="FunFam" id="3.20.20.540:FF:000001">
    <property type="entry name" value="Phosphomethylpyrimidine synthase"/>
    <property type="match status" value="1"/>
</dbReference>
<dbReference type="Gene3D" id="6.10.250.620">
    <property type="match status" value="1"/>
</dbReference>
<dbReference type="Gene3D" id="3.20.20.540">
    <property type="entry name" value="Radical SAM ThiC family, central domain"/>
    <property type="match status" value="1"/>
</dbReference>
<dbReference type="HAMAP" id="MF_00089">
    <property type="entry name" value="ThiC"/>
    <property type="match status" value="1"/>
</dbReference>
<dbReference type="InterPro" id="IPR037509">
    <property type="entry name" value="ThiC"/>
</dbReference>
<dbReference type="InterPro" id="IPR038521">
    <property type="entry name" value="ThiC/Bza_core_dom"/>
</dbReference>
<dbReference type="InterPro" id="IPR002817">
    <property type="entry name" value="ThiC/BzaA/B"/>
</dbReference>
<dbReference type="NCBIfam" id="NF006763">
    <property type="entry name" value="PRK09284.1"/>
    <property type="match status" value="1"/>
</dbReference>
<dbReference type="NCBIfam" id="NF009895">
    <property type="entry name" value="PRK13352.1"/>
    <property type="match status" value="1"/>
</dbReference>
<dbReference type="NCBIfam" id="TIGR00190">
    <property type="entry name" value="thiC"/>
    <property type="match status" value="1"/>
</dbReference>
<dbReference type="PANTHER" id="PTHR30557:SF1">
    <property type="entry name" value="PHOSPHOMETHYLPYRIMIDINE SYNTHASE, CHLOROPLASTIC"/>
    <property type="match status" value="1"/>
</dbReference>
<dbReference type="PANTHER" id="PTHR30557">
    <property type="entry name" value="THIAMINE BIOSYNTHESIS PROTEIN THIC"/>
    <property type="match status" value="1"/>
</dbReference>
<dbReference type="Pfam" id="PF01964">
    <property type="entry name" value="ThiC_Rad_SAM"/>
    <property type="match status" value="1"/>
</dbReference>
<dbReference type="SFLD" id="SFLDF00407">
    <property type="entry name" value="phosphomethylpyrimidine_syntha"/>
    <property type="match status" value="1"/>
</dbReference>
<dbReference type="SFLD" id="SFLDG01114">
    <property type="entry name" value="phosphomethylpyrimidine_syntha"/>
    <property type="match status" value="1"/>
</dbReference>
<dbReference type="SFLD" id="SFLDS00113">
    <property type="entry name" value="Radical_SAM_Phosphomethylpyrim"/>
    <property type="match status" value="1"/>
</dbReference>
<protein>
    <recommendedName>
        <fullName evidence="1">Phosphomethylpyrimidine synthase</fullName>
        <ecNumber evidence="1">4.1.99.17</ecNumber>
    </recommendedName>
    <alternativeName>
        <fullName evidence="1">Hydroxymethylpyrimidine phosphate synthase</fullName>
        <shortName evidence="1">HMP-P synthase</shortName>
        <shortName evidence="1">HMP-phosphate synthase</shortName>
        <shortName evidence="1">HMPP synthase</shortName>
    </alternativeName>
    <alternativeName>
        <fullName evidence="1">Thiamine biosynthesis protein ThiC</fullName>
    </alternativeName>
</protein>
<evidence type="ECO:0000255" key="1">
    <source>
        <dbReference type="HAMAP-Rule" id="MF_00089"/>
    </source>
</evidence>
<evidence type="ECO:0000305" key="2"/>
<sequence>MEPVQKLQIPYKSIRLSDGTEYQSYHTEGALSGKQPADYKNGIPAFRKEWIQKRFNHSNHSQMYFAKKGIITEEMRYAAFRENMEPEFVRSEIACGRAILPSNRNHPELEPMVIGKNFLVKINANIGNSTFSSSIEEEVEKLHWAIKWGADTVMDLSTGKNIHETREWILRNSPVPIGTVPIYQALEKVKGKTENLNIQIFLETLEEQAEQGVDYFTIHAGVLLRYIPLTTNRITGIVSRGGSILAKWCQAHHKENFLYTHFDEILKVMKKYGVSISLGDGLRPGSIADANDKAQFSELETLGELTQLAWKEDIQVMIEGPGHVPMNLIKENVDLQTKICQEAPFYTLGPIVTDIAPGYDHITSAIGAAMIGWYGTAMLCYVTPKEHLGLPNKEDVKQGVIAYKIAAHAADLAKGHPGAIDRDNLLSKARFEFRWEDQFSLSLDPETAKTFHDEMLPQDRMKTAHFCSMCGPHFCSMNLTQELRKFAQEKEIQES</sequence>